<gene>
    <name type="primary">yjiT</name>
    <name type="ordered locus">b4342</name>
    <name type="ordered locus">JW5787</name>
</gene>
<keyword id="KW-1185">Reference proteome</keyword>
<organism>
    <name type="scientific">Escherichia coli (strain K12)</name>
    <dbReference type="NCBI Taxonomy" id="83333"/>
    <lineage>
        <taxon>Bacteria</taxon>
        <taxon>Pseudomonadati</taxon>
        <taxon>Pseudomonadota</taxon>
        <taxon>Gammaproteobacteria</taxon>
        <taxon>Enterobacterales</taxon>
        <taxon>Enterobacteriaceae</taxon>
        <taxon>Escherichia</taxon>
    </lineage>
</organism>
<feature type="chain" id="PRO_0000169797" description="Protein YjiT">
    <location>
        <begin position="1"/>
        <end position="521"/>
    </location>
</feature>
<accession>P39391</accession>
<accession>A0A385XNK3</accession>
<accession>Q2M5X2</accession>
<comment type="miscellaneous">
    <text evidence="1">May be missing up to 600 C-terminal residues compared to orthologs.</text>
</comment>
<comment type="sequence caution" evidence="1">
    <conflict type="erroneous initiation">
        <sequence resource="EMBL-CDS" id="AYC08262"/>
    </conflict>
    <text>Truncated N-terminus.</text>
</comment>
<comment type="sequence caution" evidence="1">
    <conflict type="erroneous initiation">
        <sequence resource="EMBL-CDS" id="BAE78334"/>
    </conflict>
    <text>Truncated N-terminus.</text>
</comment>
<evidence type="ECO:0000305" key="1"/>
<name>YJIT_ECOLI</name>
<sequence>MLWGFVFVSFISKELALGQSEYISWVKCTSWLSNFVNLRGLRQPDGRPLYEYHATNDEYTQLTQLLRAVGQSQSNICNRDFAACFVLFCSEWYRRDYERQCGWTWDPIYKKIGISFTATELGTIVPKGMEDYWLRPIRFYESERRNFLGTLFSEGGLPFRLLKESDSRFLAVFSRILGQYEQAKQSGFSALSLARAVIEKSALPTVFSEDTSVELISHMADNLNSLVLTHNLINHKEPVQQLEKVHPTWRSEFPIPLDDETGTHFLNGLLCAASVEAKPRLQKNKSTRCQFYWSEKHPDELRVIVSLPDEVSFPVTSEPSTTRFELAICEDGEEVSGLGPAYASLENRQATVRLRKSEVRFGRQNPSAGLSLVARAGGMIVGSIKLDDSEIAIGEVPLTFIVDADQWLLQGQASCSVRSSDVLIVLPRDNSNVAGFDGQSRAVNVLGLKALPVKGCQDVTVTANETYRIRTGREQISIGRFALNGKRASWVCHPDETFIGVPKVISTLPDIQSIDVTRYTC</sequence>
<protein>
    <recommendedName>
        <fullName>Protein YjiT</fullName>
    </recommendedName>
</protein>
<proteinExistence type="predicted"/>
<dbReference type="EMBL" id="U14003">
    <property type="protein sequence ID" value="AAA97238.1"/>
    <property type="molecule type" value="Genomic_DNA"/>
</dbReference>
<dbReference type="EMBL" id="U00096">
    <property type="protein sequence ID" value="AYC08262.1"/>
    <property type="status" value="ALT_INIT"/>
    <property type="molecule type" value="Genomic_DNA"/>
</dbReference>
<dbReference type="EMBL" id="AP009048">
    <property type="protein sequence ID" value="BAE78334.1"/>
    <property type="status" value="ALT_INIT"/>
    <property type="molecule type" value="Genomic_DNA"/>
</dbReference>
<dbReference type="PIR" id="S56567">
    <property type="entry name" value="S56567"/>
</dbReference>
<dbReference type="BioGRID" id="4262762">
    <property type="interactions" value="7"/>
</dbReference>
<dbReference type="FunCoup" id="P39391">
    <property type="interactions" value="13"/>
</dbReference>
<dbReference type="IntAct" id="P39391">
    <property type="interactions" value="15"/>
</dbReference>
<dbReference type="EnsemblBacteria" id="AYC08262">
    <property type="protein sequence ID" value="AYC08262"/>
    <property type="gene ID" value="b4342"/>
</dbReference>
<dbReference type="KEGG" id="ecj:JW5787"/>
<dbReference type="KEGG" id="ecoc:C3026_23465"/>
<dbReference type="EchoBASE" id="EB2468"/>
<dbReference type="eggNOG" id="COG1196">
    <property type="taxonomic scope" value="Bacteria"/>
</dbReference>
<dbReference type="HOGENOM" id="CLU_009762_2_1_6"/>
<dbReference type="InParanoid" id="P39391"/>
<dbReference type="BioCyc" id="EcoCyc:G7938-MONOMER"/>
<dbReference type="PRO" id="PR:P39391"/>
<dbReference type="Proteomes" id="UP000000625">
    <property type="component" value="Chromosome"/>
</dbReference>
<dbReference type="InterPro" id="IPR047879">
    <property type="entry name" value="YjiT"/>
</dbReference>
<dbReference type="NCBIfam" id="NF038336">
    <property type="entry name" value="YjiT_fam"/>
    <property type="match status" value="1"/>
</dbReference>
<reference key="1">
    <citation type="journal article" date="1995" name="Nucleic Acids Res.">
        <title>Analysis of the Escherichia coli genome VI: DNA sequence of the region from 92.8 through 100 minutes.</title>
        <authorList>
            <person name="Burland V.D."/>
            <person name="Plunkett G. III"/>
            <person name="Sofia H.J."/>
            <person name="Daniels D.L."/>
            <person name="Blattner F.R."/>
        </authorList>
    </citation>
    <scope>NUCLEOTIDE SEQUENCE [LARGE SCALE GENOMIC DNA]</scope>
    <source>
        <strain>K12 / MG1655 / ATCC 47076</strain>
    </source>
</reference>
<reference key="2">
    <citation type="journal article" date="1997" name="Science">
        <title>The complete genome sequence of Escherichia coli K-12.</title>
        <authorList>
            <person name="Blattner F.R."/>
            <person name="Plunkett G. III"/>
            <person name="Bloch C.A."/>
            <person name="Perna N.T."/>
            <person name="Burland V."/>
            <person name="Riley M."/>
            <person name="Collado-Vides J."/>
            <person name="Glasner J.D."/>
            <person name="Rode C.K."/>
            <person name="Mayhew G.F."/>
            <person name="Gregor J."/>
            <person name="Davis N.W."/>
            <person name="Kirkpatrick H.A."/>
            <person name="Goeden M.A."/>
            <person name="Rose D.J."/>
            <person name="Mau B."/>
            <person name="Shao Y."/>
        </authorList>
    </citation>
    <scope>NUCLEOTIDE SEQUENCE [LARGE SCALE GENOMIC DNA]</scope>
    <source>
        <strain>K12 / MG1655 / ATCC 47076</strain>
    </source>
</reference>
<reference key="3">
    <citation type="journal article" date="2006" name="Mol. Syst. Biol.">
        <title>Highly accurate genome sequences of Escherichia coli K-12 strains MG1655 and W3110.</title>
        <authorList>
            <person name="Hayashi K."/>
            <person name="Morooka N."/>
            <person name="Yamamoto Y."/>
            <person name="Fujita K."/>
            <person name="Isono K."/>
            <person name="Choi S."/>
            <person name="Ohtsubo E."/>
            <person name="Baba T."/>
            <person name="Wanner B.L."/>
            <person name="Mori H."/>
            <person name="Horiuchi T."/>
        </authorList>
    </citation>
    <scope>NUCLEOTIDE SEQUENCE [LARGE SCALE GENOMIC DNA]</scope>
    <source>
        <strain>K12 / W3110 / ATCC 27325 / DSM 5911</strain>
    </source>
</reference>